<gene>
    <name evidence="1" type="primary">dnaK</name>
    <name type="ordered locus">Mjls_0449</name>
</gene>
<evidence type="ECO:0000255" key="1">
    <source>
        <dbReference type="HAMAP-Rule" id="MF_00332"/>
    </source>
</evidence>
<evidence type="ECO:0000256" key="2">
    <source>
        <dbReference type="SAM" id="MobiDB-lite"/>
    </source>
</evidence>
<protein>
    <recommendedName>
        <fullName evidence="1">Chaperone protein DnaK</fullName>
    </recommendedName>
    <alternativeName>
        <fullName evidence="1">HSP70</fullName>
    </alternativeName>
    <alternativeName>
        <fullName evidence="1">Heat shock 70 kDa protein</fullName>
    </alternativeName>
    <alternativeName>
        <fullName evidence="1">Heat shock protein 70</fullName>
    </alternativeName>
</protein>
<sequence>MARAVGIDLGTTNSVVAVLEGGDPVVVANSEGSRTTPSVVAFARNGEVLVGQPAKNQAVTNVDRTIRSVKRHMGTDWNTEIDGKKYTAQEISARTLMKLKRDAESYLGEDITDAVITVPAYFNDAQRQATKEAGQIAGLNVLRIVNEPTAAALAYGLDKGEKEQTILVFDLGGGTFDVSLLEIGEGVVEVRATSGDNHLGGDDWDERVVTWLVDKFKASSGIDLTKDKMAMQRLREAAEKAKIELSSSQSTSINLPYITVDADKNPLFLDEQLTRAEFQRITQDLLDRTRQPFQSVIKDAGISVGDIDHVVLVGGSTRMPAVSELVKEMTGGKEPNKGVNPDEVVAVGAALQAGVLKGEVKDVLLLDVTPLSLGIETKGGVMTKLIERNTTIPTKRSETFTTADDNQPSVQIQVFQGEREIASHNKLLGSFELTGIPPAPRGVPQIEVTFDIDANGIVHVTAKDKGTGKENTIRIQEGSGLSKEEIDRMIKDAEAHADEDRKRREEADVRNQAETLVYQTEKFVKEQREAEGGSKVPEDVLTKVDGAISEAKTALAGTDIGAIKAAMEKLGTESQALGQAIYEATQAEQAAGGGAGGADGSSSSSDDDVVDAEVVDDDRENK</sequence>
<comment type="function">
    <text evidence="1">Acts as a chaperone.</text>
</comment>
<comment type="induction">
    <text evidence="1">By stress conditions e.g. heat shock.</text>
</comment>
<comment type="similarity">
    <text evidence="1">Belongs to the heat shock protein 70 family.</text>
</comment>
<name>DNAK_MYCSJ</name>
<dbReference type="EMBL" id="CP000580">
    <property type="protein sequence ID" value="ABN96261.1"/>
    <property type="molecule type" value="Genomic_DNA"/>
</dbReference>
<dbReference type="SMR" id="A3PTN4"/>
<dbReference type="KEGG" id="mjl:Mjls_0449"/>
<dbReference type="HOGENOM" id="CLU_005965_2_4_11"/>
<dbReference type="BioCyc" id="MSP164757:G1G8C-456-MONOMER"/>
<dbReference type="GO" id="GO:0005524">
    <property type="term" value="F:ATP binding"/>
    <property type="evidence" value="ECO:0007669"/>
    <property type="project" value="UniProtKB-UniRule"/>
</dbReference>
<dbReference type="GO" id="GO:0140662">
    <property type="term" value="F:ATP-dependent protein folding chaperone"/>
    <property type="evidence" value="ECO:0007669"/>
    <property type="project" value="InterPro"/>
</dbReference>
<dbReference type="GO" id="GO:0051082">
    <property type="term" value="F:unfolded protein binding"/>
    <property type="evidence" value="ECO:0007669"/>
    <property type="project" value="InterPro"/>
</dbReference>
<dbReference type="CDD" id="cd10234">
    <property type="entry name" value="ASKHA_NBD_HSP70_DnaK-like"/>
    <property type="match status" value="1"/>
</dbReference>
<dbReference type="FunFam" id="2.60.34.10:FF:000014">
    <property type="entry name" value="Chaperone protein DnaK HSP70"/>
    <property type="match status" value="1"/>
</dbReference>
<dbReference type="FunFam" id="1.20.1270.10:FF:000001">
    <property type="entry name" value="Molecular chaperone DnaK"/>
    <property type="match status" value="1"/>
</dbReference>
<dbReference type="FunFam" id="3.30.420.40:FF:000071">
    <property type="entry name" value="Molecular chaperone DnaK"/>
    <property type="match status" value="1"/>
</dbReference>
<dbReference type="FunFam" id="3.90.640.10:FF:000003">
    <property type="entry name" value="Molecular chaperone DnaK"/>
    <property type="match status" value="1"/>
</dbReference>
<dbReference type="Gene3D" id="1.20.1270.10">
    <property type="match status" value="1"/>
</dbReference>
<dbReference type="Gene3D" id="3.30.420.40">
    <property type="match status" value="3"/>
</dbReference>
<dbReference type="Gene3D" id="3.90.640.10">
    <property type="entry name" value="Actin, Chain A, domain 4"/>
    <property type="match status" value="1"/>
</dbReference>
<dbReference type="Gene3D" id="2.60.34.10">
    <property type="entry name" value="Substrate Binding Domain Of DNAk, Chain A, domain 1"/>
    <property type="match status" value="1"/>
</dbReference>
<dbReference type="HAMAP" id="MF_00332">
    <property type="entry name" value="DnaK"/>
    <property type="match status" value="1"/>
</dbReference>
<dbReference type="InterPro" id="IPR043129">
    <property type="entry name" value="ATPase_NBD"/>
</dbReference>
<dbReference type="InterPro" id="IPR012725">
    <property type="entry name" value="Chaperone_DnaK"/>
</dbReference>
<dbReference type="InterPro" id="IPR018181">
    <property type="entry name" value="Heat_shock_70_CS"/>
</dbReference>
<dbReference type="InterPro" id="IPR029048">
    <property type="entry name" value="HSP70_C_sf"/>
</dbReference>
<dbReference type="InterPro" id="IPR029047">
    <property type="entry name" value="HSP70_peptide-bd_sf"/>
</dbReference>
<dbReference type="InterPro" id="IPR013126">
    <property type="entry name" value="Hsp_70_fam"/>
</dbReference>
<dbReference type="NCBIfam" id="NF001413">
    <property type="entry name" value="PRK00290.1"/>
    <property type="match status" value="1"/>
</dbReference>
<dbReference type="NCBIfam" id="TIGR02350">
    <property type="entry name" value="prok_dnaK"/>
    <property type="match status" value="1"/>
</dbReference>
<dbReference type="PANTHER" id="PTHR19375">
    <property type="entry name" value="HEAT SHOCK PROTEIN 70KDA"/>
    <property type="match status" value="1"/>
</dbReference>
<dbReference type="Pfam" id="PF00012">
    <property type="entry name" value="HSP70"/>
    <property type="match status" value="2"/>
</dbReference>
<dbReference type="PRINTS" id="PR00301">
    <property type="entry name" value="HEATSHOCK70"/>
</dbReference>
<dbReference type="SUPFAM" id="SSF53067">
    <property type="entry name" value="Actin-like ATPase domain"/>
    <property type="match status" value="2"/>
</dbReference>
<dbReference type="SUPFAM" id="SSF100934">
    <property type="entry name" value="Heat shock protein 70kD (HSP70), C-terminal subdomain"/>
    <property type="match status" value="1"/>
</dbReference>
<dbReference type="SUPFAM" id="SSF100920">
    <property type="entry name" value="Heat shock protein 70kD (HSP70), peptide-binding domain"/>
    <property type="match status" value="1"/>
</dbReference>
<dbReference type="PROSITE" id="PS00297">
    <property type="entry name" value="HSP70_1"/>
    <property type="match status" value="1"/>
</dbReference>
<dbReference type="PROSITE" id="PS00329">
    <property type="entry name" value="HSP70_2"/>
    <property type="match status" value="1"/>
</dbReference>
<dbReference type="PROSITE" id="PS01036">
    <property type="entry name" value="HSP70_3"/>
    <property type="match status" value="1"/>
</dbReference>
<accession>A3PTN4</accession>
<organism>
    <name type="scientific">Mycobacterium sp. (strain JLS)</name>
    <dbReference type="NCBI Taxonomy" id="164757"/>
    <lineage>
        <taxon>Bacteria</taxon>
        <taxon>Bacillati</taxon>
        <taxon>Actinomycetota</taxon>
        <taxon>Actinomycetes</taxon>
        <taxon>Mycobacteriales</taxon>
        <taxon>Mycobacteriaceae</taxon>
        <taxon>Mycobacterium</taxon>
    </lineage>
</organism>
<keyword id="KW-0067">ATP-binding</keyword>
<keyword id="KW-0143">Chaperone</keyword>
<keyword id="KW-0547">Nucleotide-binding</keyword>
<keyword id="KW-0597">Phosphoprotein</keyword>
<keyword id="KW-0346">Stress response</keyword>
<proteinExistence type="inferred from homology"/>
<feature type="chain" id="PRO_1000059608" description="Chaperone protein DnaK">
    <location>
        <begin position="1"/>
        <end position="622"/>
    </location>
</feature>
<feature type="region of interest" description="Disordered" evidence="2">
    <location>
        <begin position="494"/>
        <end position="513"/>
    </location>
</feature>
<feature type="region of interest" description="Disordered" evidence="2">
    <location>
        <begin position="588"/>
        <end position="622"/>
    </location>
</feature>
<feature type="compositionally biased region" description="Basic and acidic residues" evidence="2">
    <location>
        <begin position="494"/>
        <end position="511"/>
    </location>
</feature>
<feature type="compositionally biased region" description="Acidic residues" evidence="2">
    <location>
        <begin position="605"/>
        <end position="622"/>
    </location>
</feature>
<feature type="modified residue" description="Phosphothreonine; by autocatalysis" evidence="1">
    <location>
        <position position="175"/>
    </location>
</feature>
<reference key="1">
    <citation type="submission" date="2007-02" db="EMBL/GenBank/DDBJ databases">
        <title>Complete sequence of Mycobacterium sp. JLS.</title>
        <authorList>
            <consortium name="US DOE Joint Genome Institute"/>
            <person name="Copeland A."/>
            <person name="Lucas S."/>
            <person name="Lapidus A."/>
            <person name="Barry K."/>
            <person name="Detter J.C."/>
            <person name="Glavina del Rio T."/>
            <person name="Hammon N."/>
            <person name="Israni S."/>
            <person name="Dalin E."/>
            <person name="Tice H."/>
            <person name="Pitluck S."/>
            <person name="Chain P."/>
            <person name="Malfatti S."/>
            <person name="Shin M."/>
            <person name="Vergez L."/>
            <person name="Schmutz J."/>
            <person name="Larimer F."/>
            <person name="Land M."/>
            <person name="Hauser L."/>
            <person name="Kyrpides N."/>
            <person name="Mikhailova N."/>
            <person name="Miller C.D."/>
            <person name="Anderson A.J."/>
            <person name="Sims R.C."/>
            <person name="Richardson P."/>
        </authorList>
    </citation>
    <scope>NUCLEOTIDE SEQUENCE [LARGE SCALE GENOMIC DNA]</scope>
    <source>
        <strain>JLS</strain>
    </source>
</reference>